<gene>
    <name evidence="1" type="primary">rhlB</name>
    <name type="ordered locus">YPN_0094</name>
    <name type="ORF">YP516_0046</name>
</gene>
<feature type="chain" id="PRO_1000082882" description="ATP-dependent RNA helicase RhlB">
    <location>
        <begin position="1"/>
        <end position="428"/>
    </location>
</feature>
<feature type="domain" description="Helicase ATP-binding" evidence="1">
    <location>
        <begin position="40"/>
        <end position="219"/>
    </location>
</feature>
<feature type="domain" description="Helicase C-terminal" evidence="1">
    <location>
        <begin position="245"/>
        <end position="390"/>
    </location>
</feature>
<feature type="region of interest" description="Disordered" evidence="2">
    <location>
        <begin position="394"/>
        <end position="428"/>
    </location>
</feature>
<feature type="short sequence motif" description="Q motif">
    <location>
        <begin position="9"/>
        <end position="37"/>
    </location>
</feature>
<feature type="short sequence motif" description="DEAD box">
    <location>
        <begin position="165"/>
        <end position="168"/>
    </location>
</feature>
<feature type="binding site" evidence="1">
    <location>
        <begin position="53"/>
        <end position="60"/>
    </location>
    <ligand>
        <name>ATP</name>
        <dbReference type="ChEBI" id="CHEBI:30616"/>
    </ligand>
</feature>
<reference key="1">
    <citation type="journal article" date="2006" name="J. Bacteriol.">
        <title>Complete genome sequence of Yersinia pestis strains Antiqua and Nepal516: evidence of gene reduction in an emerging pathogen.</title>
        <authorList>
            <person name="Chain P.S.G."/>
            <person name="Hu P."/>
            <person name="Malfatti S.A."/>
            <person name="Radnedge L."/>
            <person name="Larimer F."/>
            <person name="Vergez L.M."/>
            <person name="Worsham P."/>
            <person name="Chu M.C."/>
            <person name="Andersen G.L."/>
        </authorList>
    </citation>
    <scope>NUCLEOTIDE SEQUENCE [LARGE SCALE GENOMIC DNA]</scope>
    <source>
        <strain>Nepal516</strain>
    </source>
</reference>
<reference key="2">
    <citation type="submission" date="2009-04" db="EMBL/GenBank/DDBJ databases">
        <title>Yersinia pestis Nepal516A whole genome shotgun sequencing project.</title>
        <authorList>
            <person name="Plunkett G. III"/>
            <person name="Anderson B.D."/>
            <person name="Baumler D.J."/>
            <person name="Burland V."/>
            <person name="Cabot E.L."/>
            <person name="Glasner J.D."/>
            <person name="Mau B."/>
            <person name="Neeno-Eckwall E."/>
            <person name="Perna N.T."/>
            <person name="Munk A.C."/>
            <person name="Tapia R."/>
            <person name="Green L.D."/>
            <person name="Rogers Y.C."/>
            <person name="Detter J.C."/>
            <person name="Bruce D.C."/>
            <person name="Brettin T.S."/>
        </authorList>
    </citation>
    <scope>NUCLEOTIDE SEQUENCE [LARGE SCALE GENOMIC DNA]</scope>
    <source>
        <strain>Nepal516</strain>
    </source>
</reference>
<evidence type="ECO:0000255" key="1">
    <source>
        <dbReference type="HAMAP-Rule" id="MF_00661"/>
    </source>
</evidence>
<evidence type="ECO:0000256" key="2">
    <source>
        <dbReference type="SAM" id="MobiDB-lite"/>
    </source>
</evidence>
<proteinExistence type="inferred from homology"/>
<protein>
    <recommendedName>
        <fullName evidence="1">ATP-dependent RNA helicase RhlB</fullName>
        <ecNumber evidence="1">3.6.4.13</ecNumber>
    </recommendedName>
</protein>
<comment type="function">
    <text evidence="1">DEAD-box RNA helicase involved in RNA degradation. Has RNA-dependent ATPase activity and unwinds double-stranded RNA.</text>
</comment>
<comment type="catalytic activity">
    <reaction evidence="1">
        <text>ATP + H2O = ADP + phosphate + H(+)</text>
        <dbReference type="Rhea" id="RHEA:13065"/>
        <dbReference type="ChEBI" id="CHEBI:15377"/>
        <dbReference type="ChEBI" id="CHEBI:15378"/>
        <dbReference type="ChEBI" id="CHEBI:30616"/>
        <dbReference type="ChEBI" id="CHEBI:43474"/>
        <dbReference type="ChEBI" id="CHEBI:456216"/>
        <dbReference type="EC" id="3.6.4.13"/>
    </reaction>
</comment>
<comment type="subunit">
    <text evidence="1">Component of the RNA degradosome, which is a multiprotein complex involved in RNA processing and mRNA degradation.</text>
</comment>
<comment type="subcellular location">
    <subcellularLocation>
        <location evidence="1">Cytoplasm</location>
    </subcellularLocation>
</comment>
<comment type="similarity">
    <text evidence="1">Belongs to the DEAD box helicase family. RhlB subfamily.</text>
</comment>
<sequence length="428" mass="47947">MSKTHLTEQKFSDFALHPLVVEALENKGFQYCTPIQALALPLTLSGRDVAGQAQTGTGKTLAFLASTFHYLLSHPAEEGRQTNQPRALIMAPTRELAVQIHSDAESLSQVTGLKLGLAYGGDGYDKQLKVLESGVDILIGTTGRLIDYAKQNYINLGAIQVVVLDEADRMYDLGFIKDIRWLFRRMPSVDKRLNMLFSATLSYRVRELAFEQMNNAEYVEVEPLQKTGHRIKEELFYPSNEEKMRLLQTLIEEEWPDRCIIFANTKHRCEEIWGHLAADGHRVGLLTGDVAQKKRLRILEDFTKGDLDILVATDVAARGLHIPLVTHVFNYDLPDDCEDYVHRIGRTGRAGESGHSISLACEEYALNLPAIETYTGHSIPVSKYNSDALLTDLPAPKRLARTRTGNGPRRNSAPRRSGAPRNNRKRPG</sequence>
<name>RHLB_YERPN</name>
<keyword id="KW-0067">ATP-binding</keyword>
<keyword id="KW-0963">Cytoplasm</keyword>
<keyword id="KW-0347">Helicase</keyword>
<keyword id="KW-0378">Hydrolase</keyword>
<keyword id="KW-0547">Nucleotide-binding</keyword>
<keyword id="KW-0694">RNA-binding</keyword>
<accession>Q1CNK3</accession>
<accession>D1Q0Y0</accession>
<dbReference type="EC" id="3.6.4.13" evidence="1"/>
<dbReference type="EMBL" id="CP000305">
    <property type="protein sequence ID" value="ABG16427.1"/>
    <property type="molecule type" value="Genomic_DNA"/>
</dbReference>
<dbReference type="EMBL" id="ACNQ01000001">
    <property type="protein sequence ID" value="EEO78534.1"/>
    <property type="molecule type" value="Genomic_DNA"/>
</dbReference>
<dbReference type="RefSeq" id="WP_002228177.1">
    <property type="nucleotide sequence ID" value="NZ_ACNQ01000001.1"/>
</dbReference>
<dbReference type="SMR" id="Q1CNK3"/>
<dbReference type="GeneID" id="96663646"/>
<dbReference type="KEGG" id="ypn:YPN_0094"/>
<dbReference type="HOGENOM" id="CLU_003041_1_3_6"/>
<dbReference type="Proteomes" id="UP000008936">
    <property type="component" value="Chromosome"/>
</dbReference>
<dbReference type="GO" id="GO:0005829">
    <property type="term" value="C:cytosol"/>
    <property type="evidence" value="ECO:0007669"/>
    <property type="project" value="TreeGrafter"/>
</dbReference>
<dbReference type="GO" id="GO:0005524">
    <property type="term" value="F:ATP binding"/>
    <property type="evidence" value="ECO:0007669"/>
    <property type="project" value="UniProtKB-UniRule"/>
</dbReference>
<dbReference type="GO" id="GO:0016887">
    <property type="term" value="F:ATP hydrolysis activity"/>
    <property type="evidence" value="ECO:0007669"/>
    <property type="project" value="RHEA"/>
</dbReference>
<dbReference type="GO" id="GO:0003723">
    <property type="term" value="F:RNA binding"/>
    <property type="evidence" value="ECO:0007669"/>
    <property type="project" value="UniProtKB-UniRule"/>
</dbReference>
<dbReference type="GO" id="GO:0003724">
    <property type="term" value="F:RNA helicase activity"/>
    <property type="evidence" value="ECO:0007669"/>
    <property type="project" value="UniProtKB-UniRule"/>
</dbReference>
<dbReference type="GO" id="GO:0006401">
    <property type="term" value="P:RNA catabolic process"/>
    <property type="evidence" value="ECO:0007669"/>
    <property type="project" value="UniProtKB-UniRule"/>
</dbReference>
<dbReference type="CDD" id="cd00268">
    <property type="entry name" value="DEADc"/>
    <property type="match status" value="1"/>
</dbReference>
<dbReference type="CDD" id="cd18787">
    <property type="entry name" value="SF2_C_DEAD"/>
    <property type="match status" value="1"/>
</dbReference>
<dbReference type="FunFam" id="3.40.50.300:FF:000312">
    <property type="entry name" value="ATP-dependent RNA helicase RhlB"/>
    <property type="match status" value="1"/>
</dbReference>
<dbReference type="Gene3D" id="3.40.50.300">
    <property type="entry name" value="P-loop containing nucleotide triphosphate hydrolases"/>
    <property type="match status" value="2"/>
</dbReference>
<dbReference type="HAMAP" id="MF_00661">
    <property type="entry name" value="DEAD_helicase_RhlB"/>
    <property type="match status" value="1"/>
</dbReference>
<dbReference type="InterPro" id="IPR011545">
    <property type="entry name" value="DEAD/DEAH_box_helicase_dom"/>
</dbReference>
<dbReference type="InterPro" id="IPR050079">
    <property type="entry name" value="DEAD_box_RNA_helicase"/>
</dbReference>
<dbReference type="InterPro" id="IPR014001">
    <property type="entry name" value="Helicase_ATP-bd"/>
</dbReference>
<dbReference type="InterPro" id="IPR001650">
    <property type="entry name" value="Helicase_C-like"/>
</dbReference>
<dbReference type="InterPro" id="IPR027417">
    <property type="entry name" value="P-loop_NTPase"/>
</dbReference>
<dbReference type="InterPro" id="IPR000629">
    <property type="entry name" value="RNA-helicase_DEAD-box_CS"/>
</dbReference>
<dbReference type="InterPro" id="IPR023554">
    <property type="entry name" value="RNA_helicase_ATP-dep_RhlB"/>
</dbReference>
<dbReference type="InterPro" id="IPR014014">
    <property type="entry name" value="RNA_helicase_DEAD_Q_motif"/>
</dbReference>
<dbReference type="NCBIfam" id="NF003419">
    <property type="entry name" value="PRK04837.1"/>
    <property type="match status" value="1"/>
</dbReference>
<dbReference type="PANTHER" id="PTHR47959:SF10">
    <property type="entry name" value="ATP-DEPENDENT RNA HELICASE RHLB"/>
    <property type="match status" value="1"/>
</dbReference>
<dbReference type="PANTHER" id="PTHR47959">
    <property type="entry name" value="ATP-DEPENDENT RNA HELICASE RHLE-RELATED"/>
    <property type="match status" value="1"/>
</dbReference>
<dbReference type="Pfam" id="PF00270">
    <property type="entry name" value="DEAD"/>
    <property type="match status" value="1"/>
</dbReference>
<dbReference type="Pfam" id="PF00271">
    <property type="entry name" value="Helicase_C"/>
    <property type="match status" value="1"/>
</dbReference>
<dbReference type="SMART" id="SM00487">
    <property type="entry name" value="DEXDc"/>
    <property type="match status" value="1"/>
</dbReference>
<dbReference type="SMART" id="SM00490">
    <property type="entry name" value="HELICc"/>
    <property type="match status" value="1"/>
</dbReference>
<dbReference type="SUPFAM" id="SSF52540">
    <property type="entry name" value="P-loop containing nucleoside triphosphate hydrolases"/>
    <property type="match status" value="1"/>
</dbReference>
<dbReference type="PROSITE" id="PS00039">
    <property type="entry name" value="DEAD_ATP_HELICASE"/>
    <property type="match status" value="1"/>
</dbReference>
<dbReference type="PROSITE" id="PS51192">
    <property type="entry name" value="HELICASE_ATP_BIND_1"/>
    <property type="match status" value="1"/>
</dbReference>
<dbReference type="PROSITE" id="PS51194">
    <property type="entry name" value="HELICASE_CTER"/>
    <property type="match status" value="1"/>
</dbReference>
<dbReference type="PROSITE" id="PS51195">
    <property type="entry name" value="Q_MOTIF"/>
    <property type="match status" value="1"/>
</dbReference>
<organism>
    <name type="scientific">Yersinia pestis bv. Antiqua (strain Nepal516)</name>
    <dbReference type="NCBI Taxonomy" id="377628"/>
    <lineage>
        <taxon>Bacteria</taxon>
        <taxon>Pseudomonadati</taxon>
        <taxon>Pseudomonadota</taxon>
        <taxon>Gammaproteobacteria</taxon>
        <taxon>Enterobacterales</taxon>
        <taxon>Yersiniaceae</taxon>
        <taxon>Yersinia</taxon>
    </lineage>
</organism>